<keyword id="KW-0201">Cytochrome c-type biogenesis</keyword>
<keyword id="KW-0472">Membrane</keyword>
<keyword id="KW-0793">Thylakoid</keyword>
<keyword id="KW-0812">Transmembrane</keyword>
<keyword id="KW-1133">Transmembrane helix</keyword>
<name>CCSA_SYNSC</name>
<reference key="1">
    <citation type="submission" date="2005-07" db="EMBL/GenBank/DDBJ databases">
        <title>Complete sequence of Synechococcus sp. CC9605.</title>
        <authorList>
            <consortium name="US DOE Joint Genome Institute"/>
            <person name="Copeland A."/>
            <person name="Lucas S."/>
            <person name="Lapidus A."/>
            <person name="Barry K."/>
            <person name="Detter J.C."/>
            <person name="Glavina T."/>
            <person name="Hammon N."/>
            <person name="Israni S."/>
            <person name="Pitluck S."/>
            <person name="Schmutz J."/>
            <person name="Martinez M."/>
            <person name="Larimer F."/>
            <person name="Land M."/>
            <person name="Kyrpides N."/>
            <person name="Ivanova N."/>
            <person name="Richardson P."/>
        </authorList>
    </citation>
    <scope>NUCLEOTIDE SEQUENCE [LARGE SCALE GENOMIC DNA]</scope>
    <source>
        <strain>CC9605</strain>
    </source>
</reference>
<proteinExistence type="inferred from homology"/>
<organism>
    <name type="scientific">Synechococcus sp. (strain CC9605)</name>
    <dbReference type="NCBI Taxonomy" id="110662"/>
    <lineage>
        <taxon>Bacteria</taxon>
        <taxon>Bacillati</taxon>
        <taxon>Cyanobacteriota</taxon>
        <taxon>Cyanophyceae</taxon>
        <taxon>Synechococcales</taxon>
        <taxon>Synechococcaceae</taxon>
        <taxon>Synechococcus</taxon>
    </lineage>
</organism>
<sequence length="304" mass="32941">MLNTPFELVTSLGFAGFVLLLLAMPLAFWAVSSQSRAGLVRLLVAVANLLFTAQLILRWWQSGHFPISNLYESLCFLAWACTLTQLLVERAWPSPIVAAAATPMGLGCIAFASFALPDQLQSAAPLVPALRSSWLVMHVSVIMVSYAALLVGSLLSLAVLVTDRDQSLELRSSSIGSGGFRQAASIANGGSVQLQSVQLSTNEQLDSLSYRTITVGFLMLTVGIVSGAVWANEAWGSYWSWDPKETWALICWLVYAAYLHTRLSRGWQGRRPALVAVVGLVVIAVCYIGVNLLGIGLHSYGWFF</sequence>
<protein>
    <recommendedName>
        <fullName evidence="2">Cytochrome c biogenesis protein CcsA</fullName>
    </recommendedName>
</protein>
<comment type="function">
    <text evidence="2">Required during biogenesis of c-type cytochromes (cytochrome c6 and cytochrome f) at the step of heme attachment.</text>
</comment>
<comment type="subunit">
    <text evidence="1">May interact with ccs1.</text>
</comment>
<comment type="subcellular location">
    <subcellularLocation>
        <location evidence="2">Cellular thylakoid membrane</location>
        <topology evidence="2">Multi-pass membrane protein</topology>
    </subcellularLocation>
</comment>
<comment type="similarity">
    <text evidence="2">Belongs to the CcmF/CycK/Ccl1/NrfE/CcsA family.</text>
</comment>
<gene>
    <name evidence="2" type="primary">ccsA</name>
    <name type="ordered locus">Syncc9605_1248</name>
</gene>
<dbReference type="EMBL" id="CP000110">
    <property type="protein sequence ID" value="ABB35003.1"/>
    <property type="molecule type" value="Genomic_DNA"/>
</dbReference>
<dbReference type="RefSeq" id="WP_011364222.1">
    <property type="nucleotide sequence ID" value="NC_007516.1"/>
</dbReference>
<dbReference type="SMR" id="Q3AK79"/>
<dbReference type="STRING" id="110662.Syncc9605_1248"/>
<dbReference type="KEGG" id="syd:Syncc9605_1248"/>
<dbReference type="eggNOG" id="COG0755">
    <property type="taxonomic scope" value="Bacteria"/>
</dbReference>
<dbReference type="HOGENOM" id="CLU_049710_2_4_3"/>
<dbReference type="OrthoDB" id="9814290at2"/>
<dbReference type="GO" id="GO:0031676">
    <property type="term" value="C:plasma membrane-derived thylakoid membrane"/>
    <property type="evidence" value="ECO:0007669"/>
    <property type="project" value="UniProtKB-SubCell"/>
</dbReference>
<dbReference type="GO" id="GO:0020037">
    <property type="term" value="F:heme binding"/>
    <property type="evidence" value="ECO:0007669"/>
    <property type="project" value="InterPro"/>
</dbReference>
<dbReference type="GO" id="GO:0017004">
    <property type="term" value="P:cytochrome complex assembly"/>
    <property type="evidence" value="ECO:0007669"/>
    <property type="project" value="UniProtKB-UniRule"/>
</dbReference>
<dbReference type="HAMAP" id="MF_01391">
    <property type="entry name" value="CytC_CcsA"/>
    <property type="match status" value="1"/>
</dbReference>
<dbReference type="InterPro" id="IPR002541">
    <property type="entry name" value="Cyt_c_assembly"/>
</dbReference>
<dbReference type="InterPro" id="IPR017562">
    <property type="entry name" value="Cyt_c_biogenesis_CcsA"/>
</dbReference>
<dbReference type="InterPro" id="IPR045062">
    <property type="entry name" value="Cyt_c_biogenesis_CcsA/CcmC"/>
</dbReference>
<dbReference type="NCBIfam" id="TIGR03144">
    <property type="entry name" value="cytochr_II_ccsB"/>
    <property type="match status" value="1"/>
</dbReference>
<dbReference type="PANTHER" id="PTHR30071:SF1">
    <property type="entry name" value="CYTOCHROME B_B6 PROTEIN-RELATED"/>
    <property type="match status" value="1"/>
</dbReference>
<dbReference type="PANTHER" id="PTHR30071">
    <property type="entry name" value="HEME EXPORTER PROTEIN C"/>
    <property type="match status" value="1"/>
</dbReference>
<dbReference type="Pfam" id="PF01578">
    <property type="entry name" value="Cytochrom_C_asm"/>
    <property type="match status" value="1"/>
</dbReference>
<evidence type="ECO:0000250" key="1"/>
<evidence type="ECO:0000255" key="2">
    <source>
        <dbReference type="HAMAP-Rule" id="MF_01391"/>
    </source>
</evidence>
<accession>Q3AK79</accession>
<feature type="chain" id="PRO_5000102324" description="Cytochrome c biogenesis protein CcsA">
    <location>
        <begin position="1"/>
        <end position="304"/>
    </location>
</feature>
<feature type="transmembrane region" description="Helical" evidence="2">
    <location>
        <begin position="11"/>
        <end position="31"/>
    </location>
</feature>
<feature type="transmembrane region" description="Helical" evidence="2">
    <location>
        <begin position="37"/>
        <end position="57"/>
    </location>
</feature>
<feature type="transmembrane region" description="Helical" evidence="2">
    <location>
        <begin position="63"/>
        <end position="83"/>
    </location>
</feature>
<feature type="transmembrane region" description="Helical" evidence="2">
    <location>
        <begin position="96"/>
        <end position="116"/>
    </location>
</feature>
<feature type="transmembrane region" description="Helical" evidence="2">
    <location>
        <begin position="141"/>
        <end position="161"/>
    </location>
</feature>
<feature type="transmembrane region" description="Helical" evidence="2">
    <location>
        <begin position="212"/>
        <end position="232"/>
    </location>
</feature>
<feature type="transmembrane region" description="Helical" evidence="2">
    <location>
        <begin position="246"/>
        <end position="263"/>
    </location>
</feature>
<feature type="transmembrane region" description="Helical" evidence="2">
    <location>
        <begin position="275"/>
        <end position="295"/>
    </location>
</feature>